<reference key="1">
    <citation type="journal article" date="2002" name="J. Mol. Microbiol. Biotechnol.">
        <title>The genome of Methanosarcina mazei: evidence for lateral gene transfer between Bacteria and Archaea.</title>
        <authorList>
            <person name="Deppenmeier U."/>
            <person name="Johann A."/>
            <person name="Hartsch T."/>
            <person name="Merkl R."/>
            <person name="Schmitz R.A."/>
            <person name="Martinez-Arias R."/>
            <person name="Henne A."/>
            <person name="Wiezer A."/>
            <person name="Baeumer S."/>
            <person name="Jacobi C."/>
            <person name="Brueggemann H."/>
            <person name="Lienard T."/>
            <person name="Christmann A."/>
            <person name="Boemecke M."/>
            <person name="Steckel S."/>
            <person name="Bhattacharyya A."/>
            <person name="Lykidis A."/>
            <person name="Overbeek R."/>
            <person name="Klenk H.-P."/>
            <person name="Gunsalus R.P."/>
            <person name="Fritz H.-J."/>
            <person name="Gottschalk G."/>
        </authorList>
    </citation>
    <scope>NUCLEOTIDE SEQUENCE [LARGE SCALE GENOMIC DNA]</scope>
    <source>
        <strain>ATCC BAA-159 / DSM 3647 / Goe1 / Go1 / JCM 11833 / OCM 88</strain>
    </source>
</reference>
<protein>
    <recommendedName>
        <fullName evidence="1">5,10-methylenetetrahydromethanopterin reductase</fullName>
        <ecNumber evidence="1">1.5.98.2</ecNumber>
    </recommendedName>
    <alternativeName>
        <fullName evidence="1">Coenzyme F420-dependent N(5),N(10)-methylenetetrahydromethanopterin reductase</fullName>
    </alternativeName>
    <alternativeName>
        <fullName evidence="1">Methylene-H(4)MPT reductase</fullName>
    </alternativeName>
</protein>
<comment type="function">
    <text evidence="1">Catalyzes the reversible reduction of methylene-H(4)MPT to methyl-H(4)MPT.</text>
</comment>
<comment type="catalytic activity">
    <reaction evidence="1">
        <text>5-methyl-5,6,7,8-tetrahydromethanopterin + oxidized coenzyme F420-(gamma-L-Glu)(n) + H(+) = 5,10-methylenetetrahydromethanopterin + reduced coenzyme F420-(gamma-L-Glu)(n)</text>
        <dbReference type="Rhea" id="RHEA:21144"/>
        <dbReference type="Rhea" id="RHEA-COMP:12939"/>
        <dbReference type="Rhea" id="RHEA-COMP:14378"/>
        <dbReference type="ChEBI" id="CHEBI:15378"/>
        <dbReference type="ChEBI" id="CHEBI:57818"/>
        <dbReference type="ChEBI" id="CHEBI:58116"/>
        <dbReference type="ChEBI" id="CHEBI:133980"/>
        <dbReference type="ChEBI" id="CHEBI:139511"/>
        <dbReference type="EC" id="1.5.98.2"/>
    </reaction>
</comment>
<comment type="pathway">
    <text evidence="1">One-carbon metabolism; methanogenesis from CO(2); methyl-coenzyme M from 5,10-methylene-5,6,7,8-tetrahydromethanopterin: step 1/2.</text>
</comment>
<comment type="subcellular location">
    <subcellularLocation>
        <location evidence="1">Cytoplasm</location>
    </subcellularLocation>
</comment>
<comment type="similarity">
    <text evidence="1">Belongs to the mer family.</text>
</comment>
<proteinExistence type="inferred from homology"/>
<organism>
    <name type="scientific">Methanosarcina mazei (strain ATCC BAA-159 / DSM 3647 / Goe1 / Go1 / JCM 11833 / OCM 88)</name>
    <name type="common">Methanosarcina frisia</name>
    <dbReference type="NCBI Taxonomy" id="192952"/>
    <lineage>
        <taxon>Archaea</taxon>
        <taxon>Methanobacteriati</taxon>
        <taxon>Methanobacteriota</taxon>
        <taxon>Stenosarchaea group</taxon>
        <taxon>Methanomicrobia</taxon>
        <taxon>Methanosarcinales</taxon>
        <taxon>Methanosarcinaceae</taxon>
        <taxon>Methanosarcina</taxon>
    </lineage>
</organism>
<name>MER_METMA</name>
<keyword id="KW-0963">Cytoplasm</keyword>
<keyword id="KW-0484">Methanogenesis</keyword>
<keyword id="KW-0554">One-carbon metabolism</keyword>
<keyword id="KW-0560">Oxidoreductase</keyword>
<feature type="chain" id="PRO_0000084809" description="5,10-methylenetetrahydromethanopterin reductase">
    <location>
        <begin position="1"/>
        <end position="328"/>
    </location>
</feature>
<evidence type="ECO:0000255" key="1">
    <source>
        <dbReference type="HAMAP-Rule" id="MF_01091"/>
    </source>
</evidence>
<dbReference type="EC" id="1.5.98.2" evidence="1"/>
<dbReference type="EMBL" id="AE008384">
    <property type="protein sequence ID" value="AAM30324.1"/>
    <property type="molecule type" value="Genomic_DNA"/>
</dbReference>
<dbReference type="RefSeq" id="WP_011032579.1">
    <property type="nucleotide sequence ID" value="NC_003901.1"/>
</dbReference>
<dbReference type="SMR" id="Q8PZ66"/>
<dbReference type="GeneID" id="82159639"/>
<dbReference type="KEGG" id="mma:MM_0628"/>
<dbReference type="PATRIC" id="fig|192952.21.peg.740"/>
<dbReference type="eggNOG" id="arCOG02410">
    <property type="taxonomic scope" value="Archaea"/>
</dbReference>
<dbReference type="HOGENOM" id="CLU_027853_5_3_2"/>
<dbReference type="UniPathway" id="UPA00640">
    <property type="reaction ID" value="UER00697"/>
</dbReference>
<dbReference type="Proteomes" id="UP000000595">
    <property type="component" value="Chromosome"/>
</dbReference>
<dbReference type="GO" id="GO:0005737">
    <property type="term" value="C:cytoplasm"/>
    <property type="evidence" value="ECO:0007669"/>
    <property type="project" value="UniProtKB-SubCell"/>
</dbReference>
<dbReference type="GO" id="GO:0018537">
    <property type="term" value="F:coenzyme F420-dependent N5,N10-methenyltetrahydromethanopterin reductase activity"/>
    <property type="evidence" value="ECO:0007669"/>
    <property type="project" value="UniProtKB-UniRule"/>
</dbReference>
<dbReference type="GO" id="GO:0016705">
    <property type="term" value="F:oxidoreductase activity, acting on paired donors, with incorporation or reduction of molecular oxygen"/>
    <property type="evidence" value="ECO:0007669"/>
    <property type="project" value="InterPro"/>
</dbReference>
<dbReference type="GO" id="GO:0019386">
    <property type="term" value="P:methanogenesis, from carbon dioxide"/>
    <property type="evidence" value="ECO:0007669"/>
    <property type="project" value="UniProtKB-UniRule"/>
</dbReference>
<dbReference type="GO" id="GO:0006730">
    <property type="term" value="P:one-carbon metabolic process"/>
    <property type="evidence" value="ECO:0007669"/>
    <property type="project" value="UniProtKB-UniRule"/>
</dbReference>
<dbReference type="CDD" id="cd01097">
    <property type="entry name" value="Tetrahydromethanopterin_reductase"/>
    <property type="match status" value="1"/>
</dbReference>
<dbReference type="Gene3D" id="3.20.20.30">
    <property type="entry name" value="Luciferase-like domain"/>
    <property type="match status" value="1"/>
</dbReference>
<dbReference type="HAMAP" id="MF_01091">
    <property type="entry name" value="F420_mer"/>
    <property type="match status" value="1"/>
</dbReference>
<dbReference type="InterPro" id="IPR050564">
    <property type="entry name" value="F420-G6PD/mer"/>
</dbReference>
<dbReference type="InterPro" id="IPR011251">
    <property type="entry name" value="Luciferase-like_dom"/>
</dbReference>
<dbReference type="InterPro" id="IPR036661">
    <property type="entry name" value="Luciferase-like_sf"/>
</dbReference>
<dbReference type="InterPro" id="IPR019946">
    <property type="entry name" value="MeH4methanopterin_reductase"/>
</dbReference>
<dbReference type="NCBIfam" id="TIGR03555">
    <property type="entry name" value="F420_mer"/>
    <property type="match status" value="1"/>
</dbReference>
<dbReference type="NCBIfam" id="NF002619">
    <property type="entry name" value="PRK02271.1"/>
    <property type="match status" value="1"/>
</dbReference>
<dbReference type="PANTHER" id="PTHR43244">
    <property type="match status" value="1"/>
</dbReference>
<dbReference type="PANTHER" id="PTHR43244:SF1">
    <property type="entry name" value="5,10-METHYLENETETRAHYDROMETHANOPTERIN REDUCTASE"/>
    <property type="match status" value="1"/>
</dbReference>
<dbReference type="Pfam" id="PF00296">
    <property type="entry name" value="Bac_luciferase"/>
    <property type="match status" value="1"/>
</dbReference>
<dbReference type="SUPFAM" id="SSF51679">
    <property type="entry name" value="Bacterial luciferase-like"/>
    <property type="match status" value="1"/>
</dbReference>
<gene>
    <name evidence="1" type="primary">mer</name>
    <name type="ordered locus">MM_0628</name>
</gene>
<sequence length="328" mass="34812">MKFGIEFVPADPALKIAYYAKLSEQQGFDYVWITDHYNNRDVYSTLTVLALNTNSIKIGSGVTNSYTRNPAITASSIASIAEISGGRAVLGLGPGDKATFDAMGIAWEKPLATTKEAIQAIRDFIDGKKVSMDGEMVKFAGAKLAFKAGKIPIYMGAQGPKMLELAGEVADGVLINASHPKDFEVAVEQIRKGAEKVGRDPSEVDVTAYACFSIDKDPVKAVNAAKVVVAFIVAGSPDLVLERHGISVEAKKQIGDAIAKGDFGSLMGGLVTPQMIEAFSICGTPEDCMKRIKDLEAIGVTQIVAGSPIGPDKEKAIKLIGKEIIAKM</sequence>
<accession>Q8PZ66</accession>